<reference key="1">
    <citation type="journal article" date="2001" name="Virology">
        <title>Analysis of the first complete DNA sequence of an invertebrate iridovirus: coding strategy of the genome of Chilo iridescent virus.</title>
        <authorList>
            <person name="Jakob N.J."/>
            <person name="Mueller K."/>
            <person name="Bahr U."/>
            <person name="Darai G."/>
        </authorList>
    </citation>
    <scope>NUCLEOTIDE SEQUENCE [LARGE SCALE GENOMIC DNA]</scope>
</reference>
<reference key="2">
    <citation type="journal article" date="2007" name="Virol. J.">
        <title>Comparative genomic analysis of the family Iridoviridae: re-annotating and defining the core set of iridovirus genes.</title>
        <authorList>
            <person name="Eaton H.E."/>
            <person name="Metcalf J."/>
            <person name="Penny E."/>
            <person name="Tcherepanov V."/>
            <person name="Upton C."/>
            <person name="Brunetti C.R."/>
        </authorList>
    </citation>
    <scope>GENOME REANNOTATION</scope>
</reference>
<comment type="similarity">
    <text evidence="1">Belongs to the IIV-6 350L family.</text>
</comment>
<keyword id="KW-1185">Reference proteome</keyword>
<accession>Q91FH4</accession>
<sequence length="207" mass="24225">MSLKIKVSKKVKNQCESTKTIKSQVEIMDETKRSILCEVSHCSIEKEIHCFWDRHKITGLVIRCPLRYKPKQIVKVYKSDVSKEEYTIKENVVKFQNDVGNFKTITDNLEVTDAFCSFNCCLAWIRDNKHDRRYDESEMLLQKIYSKSQHGIPDTSLKPSPHWRTLTVYGGTLSLEEFRKNTFKTKFFYNGPILDTGYLFSKKISVC</sequence>
<proteinExistence type="inferred from homology"/>
<name>VF350_IIV6</name>
<dbReference type="EMBL" id="AF303741">
    <property type="protein sequence ID" value="AAK82211.1"/>
    <property type="molecule type" value="Genomic_DNA"/>
</dbReference>
<dbReference type="RefSeq" id="NP_149813.1">
    <property type="nucleotide sequence ID" value="NC_003038.1"/>
</dbReference>
<dbReference type="KEGG" id="vg:1732994"/>
<dbReference type="OrthoDB" id="11553at10239"/>
<dbReference type="Proteomes" id="UP000001359">
    <property type="component" value="Genome"/>
</dbReference>
<organism>
    <name type="scientific">Invertebrate iridescent virus 6</name>
    <name type="common">IIV-6</name>
    <name type="synonym">Chilo iridescent virus</name>
    <dbReference type="NCBI Taxonomy" id="176652"/>
    <lineage>
        <taxon>Viruses</taxon>
        <taxon>Varidnaviria</taxon>
        <taxon>Bamfordvirae</taxon>
        <taxon>Nucleocytoviricota</taxon>
        <taxon>Megaviricetes</taxon>
        <taxon>Pimascovirales</taxon>
        <taxon>Iridoviridae</taxon>
        <taxon>Betairidovirinae</taxon>
        <taxon>Iridovirus</taxon>
    </lineage>
</organism>
<gene>
    <name type="ORF">IIV6-350L</name>
</gene>
<organismHost>
    <name type="scientific">Acheta domesticus</name>
    <name type="common">House cricket</name>
    <dbReference type="NCBI Taxonomy" id="6997"/>
</organismHost>
<organismHost>
    <name type="scientific">Chilo suppressalis</name>
    <name type="common">Asiatic rice borer moth</name>
    <dbReference type="NCBI Taxonomy" id="168631"/>
</organismHost>
<organismHost>
    <name type="scientific">Gryllus bimaculatus</name>
    <name type="common">Two-spotted cricket</name>
    <dbReference type="NCBI Taxonomy" id="6999"/>
</organismHost>
<organismHost>
    <name type="scientific">Gryllus campestris</name>
    <dbReference type="NCBI Taxonomy" id="58607"/>
</organismHost>
<organismHost>
    <name type="scientific">Spodoptera frugiperda</name>
    <name type="common">Fall armyworm</name>
    <dbReference type="NCBI Taxonomy" id="7108"/>
</organismHost>
<feature type="chain" id="PRO_0000377866" description="Uncharacterized protein 350L">
    <location>
        <begin position="1"/>
        <end position="207"/>
    </location>
</feature>
<evidence type="ECO:0000305" key="1"/>
<protein>
    <recommendedName>
        <fullName>Uncharacterized protein 350L</fullName>
    </recommendedName>
</protein>